<name>RL35_NEIMF</name>
<keyword id="KW-0687">Ribonucleoprotein</keyword>
<keyword id="KW-0689">Ribosomal protein</keyword>
<reference key="1">
    <citation type="journal article" date="2007" name="PLoS Genet.">
        <title>Meningococcal genetic variation mechanisms viewed through comparative analysis of serogroup C strain FAM18.</title>
        <authorList>
            <person name="Bentley S.D."/>
            <person name="Vernikos G.S."/>
            <person name="Snyder L.A.S."/>
            <person name="Churcher C."/>
            <person name="Arrowsmith C."/>
            <person name="Chillingworth T."/>
            <person name="Cronin A."/>
            <person name="Davis P.H."/>
            <person name="Holroyd N.E."/>
            <person name="Jagels K."/>
            <person name="Maddison M."/>
            <person name="Moule S."/>
            <person name="Rabbinowitsch E."/>
            <person name="Sharp S."/>
            <person name="Unwin L."/>
            <person name="Whitehead S."/>
            <person name="Quail M.A."/>
            <person name="Achtman M."/>
            <person name="Barrell B.G."/>
            <person name="Saunders N.J."/>
            <person name="Parkhill J."/>
        </authorList>
    </citation>
    <scope>NUCLEOTIDE SEQUENCE [LARGE SCALE GENOMIC DNA]</scope>
    <source>
        <strain>ATCC 700532 / DSM 15464 / FAM18</strain>
    </source>
</reference>
<accession>A1KSY4</accession>
<protein>
    <recommendedName>
        <fullName evidence="1">Large ribosomal subunit protein bL35</fullName>
    </recommendedName>
    <alternativeName>
        <fullName evidence="2">50S ribosomal protein L35</fullName>
    </alternativeName>
</protein>
<feature type="chain" id="PRO_1000050726" description="Large ribosomal subunit protein bL35">
    <location>
        <begin position="1"/>
        <end position="65"/>
    </location>
</feature>
<proteinExistence type="inferred from homology"/>
<evidence type="ECO:0000255" key="1">
    <source>
        <dbReference type="HAMAP-Rule" id="MF_00514"/>
    </source>
</evidence>
<evidence type="ECO:0000305" key="2"/>
<dbReference type="EMBL" id="AM421808">
    <property type="protein sequence ID" value="CAM09965.1"/>
    <property type="molecule type" value="Genomic_DNA"/>
</dbReference>
<dbReference type="RefSeq" id="WP_002232040.1">
    <property type="nucleotide sequence ID" value="NC_008767.1"/>
</dbReference>
<dbReference type="SMR" id="A1KSY4"/>
<dbReference type="GeneID" id="93386452"/>
<dbReference type="KEGG" id="nmc:NMC0674"/>
<dbReference type="HOGENOM" id="CLU_169643_1_0_4"/>
<dbReference type="Proteomes" id="UP000002286">
    <property type="component" value="Chromosome"/>
</dbReference>
<dbReference type="GO" id="GO:0022625">
    <property type="term" value="C:cytosolic large ribosomal subunit"/>
    <property type="evidence" value="ECO:0007669"/>
    <property type="project" value="TreeGrafter"/>
</dbReference>
<dbReference type="GO" id="GO:0003735">
    <property type="term" value="F:structural constituent of ribosome"/>
    <property type="evidence" value="ECO:0007669"/>
    <property type="project" value="InterPro"/>
</dbReference>
<dbReference type="GO" id="GO:0006412">
    <property type="term" value="P:translation"/>
    <property type="evidence" value="ECO:0007669"/>
    <property type="project" value="UniProtKB-UniRule"/>
</dbReference>
<dbReference type="FunFam" id="4.10.410.60:FF:000001">
    <property type="entry name" value="50S ribosomal protein L35"/>
    <property type="match status" value="1"/>
</dbReference>
<dbReference type="Gene3D" id="4.10.410.60">
    <property type="match status" value="1"/>
</dbReference>
<dbReference type="HAMAP" id="MF_00514">
    <property type="entry name" value="Ribosomal_bL35"/>
    <property type="match status" value="1"/>
</dbReference>
<dbReference type="InterPro" id="IPR001706">
    <property type="entry name" value="Ribosomal_bL35"/>
</dbReference>
<dbReference type="InterPro" id="IPR021137">
    <property type="entry name" value="Ribosomal_bL35-like"/>
</dbReference>
<dbReference type="InterPro" id="IPR018265">
    <property type="entry name" value="Ribosomal_bL35_CS"/>
</dbReference>
<dbReference type="InterPro" id="IPR037229">
    <property type="entry name" value="Ribosomal_bL35_sf"/>
</dbReference>
<dbReference type="NCBIfam" id="TIGR00001">
    <property type="entry name" value="rpmI_bact"/>
    <property type="match status" value="1"/>
</dbReference>
<dbReference type="PANTHER" id="PTHR33343">
    <property type="entry name" value="54S RIBOSOMAL PROTEIN BL35M"/>
    <property type="match status" value="1"/>
</dbReference>
<dbReference type="PANTHER" id="PTHR33343:SF1">
    <property type="entry name" value="LARGE RIBOSOMAL SUBUNIT PROTEIN BL35M"/>
    <property type="match status" value="1"/>
</dbReference>
<dbReference type="Pfam" id="PF01632">
    <property type="entry name" value="Ribosomal_L35p"/>
    <property type="match status" value="1"/>
</dbReference>
<dbReference type="PRINTS" id="PR00064">
    <property type="entry name" value="RIBOSOMALL35"/>
</dbReference>
<dbReference type="SUPFAM" id="SSF143034">
    <property type="entry name" value="L35p-like"/>
    <property type="match status" value="1"/>
</dbReference>
<dbReference type="PROSITE" id="PS00936">
    <property type="entry name" value="RIBOSOMAL_L35"/>
    <property type="match status" value="1"/>
</dbReference>
<organism>
    <name type="scientific">Neisseria meningitidis serogroup C / serotype 2a (strain ATCC 700532 / DSM 15464 / FAM18)</name>
    <dbReference type="NCBI Taxonomy" id="272831"/>
    <lineage>
        <taxon>Bacteria</taxon>
        <taxon>Pseudomonadati</taxon>
        <taxon>Pseudomonadota</taxon>
        <taxon>Betaproteobacteria</taxon>
        <taxon>Neisseriales</taxon>
        <taxon>Neisseriaceae</taxon>
        <taxon>Neisseria</taxon>
    </lineage>
</organism>
<comment type="similarity">
    <text evidence="1">Belongs to the bacterial ribosomal protein bL35 family.</text>
</comment>
<gene>
    <name evidence="1" type="primary">rpmI</name>
    <name type="ordered locus">NMC0674</name>
</gene>
<sequence length="65" mass="7357">MPKMKTKSSAKKRFKVLGNGGVKRAHAFKRHILTKKTTKNKRQLRGTSMVNDRDLASVAKMLPYA</sequence>